<comment type="function">
    <text evidence="3">Mannose-specific lectin. Shows agglutinating activity towards erythrocytes from rabbit.</text>
</comment>
<comment type="subunit">
    <text evidence="5">Forms heterodimers.</text>
</comment>
<comment type="subcellular location">
    <subcellularLocation>
        <location evidence="8">Secreted</location>
    </subcellularLocation>
</comment>
<reference key="1">
    <citation type="submission" date="2008-07" db="EMBL/GenBank/DDBJ databases">
        <title>Cloning and expression of a novel mannose-binding lectin gene from Remusatia vivipara.</title>
        <authorList>
            <person name="Neekhra V."/>
            <person name="Bhat R.S."/>
            <person name="Chandrashekar T.M."/>
            <person name="Bhat G."/>
            <person name="Basingi S.M."/>
            <person name="Udikeri S.S."/>
            <person name="Swamy B.M."/>
            <person name="Kuruvinashetti M.S."/>
        </authorList>
    </citation>
    <scope>NUCLEOTIDE SEQUENCE [GENOMIC DNA]</scope>
</reference>
<reference key="2">
    <citation type="journal article" date="2012" name="Glycobiology">
        <title>Crystal structure of a beta-prism II lectin from Remusatia vivipara.</title>
        <authorList>
            <person name="Shetty K.N."/>
            <person name="Bhat G.G."/>
            <person name="Inamdar S.R."/>
            <person name="Swamy B.M."/>
            <person name="Suguna K."/>
        </authorList>
    </citation>
    <scope>X-RAY CRYSTALLOGRAPHY (2.40 ANGSTROMS) OF 24-132 AND 140-249</scope>
    <scope>DISULFIDE BONDS</scope>
    <scope>PROTEIN SEQUENCE OF 24-31 AND 140-147</scope>
    <scope>SUBUNIT</scope>
</reference>
<keyword id="KW-0002">3D-structure</keyword>
<keyword id="KW-0903">Direct protein sequencing</keyword>
<keyword id="KW-1015">Disulfide bond</keyword>
<keyword id="KW-0348">Hemagglutinin</keyword>
<keyword id="KW-0430">Lectin</keyword>
<keyword id="KW-0465">Mannose-binding</keyword>
<keyword id="KW-0677">Repeat</keyword>
<keyword id="KW-0964">Secreted</keyword>
<keyword id="KW-0732">Signal</keyword>
<feature type="signal peptide" evidence="5">
    <location>
        <begin position="1"/>
        <end position="23"/>
    </location>
</feature>
<feature type="chain" id="PRO_5002836532" description="Mannose-specific lectin 1 chain 1">
    <location>
        <begin position="24"/>
        <end position="139"/>
    </location>
</feature>
<feature type="chain" id="PRO_0000450782" description="Mannose-specific lectin 1 chain 2">
    <location>
        <begin position="140"/>
        <end position="256"/>
    </location>
</feature>
<feature type="domain" description="Bulb-type lectin 1" evidence="4">
    <location>
        <begin position="26"/>
        <end position="131"/>
    </location>
</feature>
<feature type="domain" description="Bulb-type lectin 2" evidence="4">
    <location>
        <begin position="145"/>
        <end position="252"/>
    </location>
</feature>
<feature type="short sequence motif" description="Carbohydrate-binding motif 1" evidence="9">
    <location>
        <begin position="51"/>
        <end position="59"/>
    </location>
</feature>
<feature type="short sequence motif" description="Carbohydrate-binding motif 2" evidence="9">
    <location>
        <begin position="170"/>
        <end position="178"/>
    </location>
</feature>
<feature type="binding site" evidence="1">
    <location>
        <begin position="51"/>
        <end position="55"/>
    </location>
    <ligand>
        <name>beta-D-mannose</name>
        <dbReference type="ChEBI" id="CHEBI:28563"/>
    </ligand>
</feature>
<feature type="binding site" evidence="1">
    <location>
        <position position="59"/>
    </location>
    <ligand>
        <name>beta-D-mannose</name>
        <dbReference type="ChEBI" id="CHEBI:28563"/>
    </ligand>
</feature>
<feature type="binding site" evidence="3">
    <location>
        <position position="63"/>
    </location>
    <ligand>
        <name>beta-D-mannose</name>
        <dbReference type="ChEBI" id="CHEBI:28563"/>
    </ligand>
</feature>
<feature type="binding site" evidence="1">
    <location>
        <position position="64"/>
    </location>
    <ligand>
        <name>beta-D-mannose</name>
        <dbReference type="ChEBI" id="CHEBI:28563"/>
    </ligand>
</feature>
<feature type="binding site" evidence="3">
    <location>
        <begin position="170"/>
        <end position="174"/>
    </location>
    <ligand>
        <name>beta-D-mannose</name>
        <dbReference type="ChEBI" id="CHEBI:28563"/>
    </ligand>
</feature>
<feature type="binding site" evidence="2">
    <location>
        <position position="178"/>
    </location>
    <ligand>
        <name>beta-D-mannose</name>
        <dbReference type="ChEBI" id="CHEBI:28563"/>
    </ligand>
</feature>
<feature type="binding site" evidence="2">
    <location>
        <begin position="182"/>
        <end position="185"/>
    </location>
    <ligand>
        <name>beta-D-mannose</name>
        <dbReference type="ChEBI" id="CHEBI:28563"/>
    </ligand>
</feature>
<feature type="disulfide bond" evidence="4 5 10">
    <location>
        <begin position="54"/>
        <end position="74"/>
    </location>
</feature>
<feature type="disulfide bond" evidence="4 5 10">
    <location>
        <begin position="173"/>
        <end position="195"/>
    </location>
</feature>
<feature type="strand" evidence="11">
    <location>
        <begin position="27"/>
        <end position="30"/>
    </location>
</feature>
<feature type="strand" evidence="11">
    <location>
        <begin position="40"/>
        <end position="43"/>
    </location>
</feature>
<feature type="strand" evidence="11">
    <location>
        <begin position="46"/>
        <end position="50"/>
    </location>
</feature>
<feature type="strand" evidence="11">
    <location>
        <begin position="56"/>
        <end position="59"/>
    </location>
</feature>
<feature type="turn" evidence="11">
    <location>
        <begin position="60"/>
        <end position="62"/>
    </location>
</feature>
<feature type="strand" evidence="11">
    <location>
        <begin position="75"/>
        <end position="78"/>
    </location>
</feature>
<feature type="strand" evidence="11">
    <location>
        <begin position="84"/>
        <end position="87"/>
    </location>
</feature>
<feature type="strand" evidence="11">
    <location>
        <begin position="93"/>
        <end position="96"/>
    </location>
</feature>
<feature type="strand" evidence="11">
    <location>
        <begin position="102"/>
        <end position="104"/>
    </location>
</feature>
<feature type="strand" evidence="11">
    <location>
        <begin position="107"/>
        <end position="111"/>
    </location>
</feature>
<feature type="turn" evidence="11">
    <location>
        <begin position="112"/>
        <end position="114"/>
    </location>
</feature>
<feature type="strand" evidence="11">
    <location>
        <begin position="115"/>
        <end position="119"/>
    </location>
</feature>
<feature type="strand" evidence="11">
    <location>
        <begin position="121"/>
        <end position="126"/>
    </location>
</feature>
<feature type="strand" evidence="11">
    <location>
        <begin position="147"/>
        <end position="149"/>
    </location>
</feature>
<feature type="strand" evidence="11">
    <location>
        <begin position="153"/>
        <end position="155"/>
    </location>
</feature>
<feature type="strand" evidence="11">
    <location>
        <begin position="158"/>
        <end position="161"/>
    </location>
</feature>
<feature type="strand" evidence="11">
    <location>
        <begin position="166"/>
        <end position="169"/>
    </location>
</feature>
<feature type="strand" evidence="11">
    <location>
        <begin position="175"/>
        <end position="178"/>
    </location>
</feature>
<feature type="strand" evidence="11">
    <location>
        <begin position="180"/>
        <end position="182"/>
    </location>
</feature>
<feature type="strand" evidence="11">
    <location>
        <begin position="191"/>
        <end position="194"/>
    </location>
</feature>
<feature type="strand" evidence="11">
    <location>
        <begin position="196"/>
        <end position="199"/>
    </location>
</feature>
<feature type="strand" evidence="11">
    <location>
        <begin position="205"/>
        <end position="208"/>
    </location>
</feature>
<feature type="strand" evidence="11">
    <location>
        <begin position="214"/>
        <end position="217"/>
    </location>
</feature>
<feature type="strand" evidence="11">
    <location>
        <begin position="223"/>
        <end position="225"/>
    </location>
</feature>
<feature type="strand" evidence="11">
    <location>
        <begin position="228"/>
        <end position="231"/>
    </location>
</feature>
<feature type="strand" evidence="11">
    <location>
        <begin position="237"/>
        <end position="240"/>
    </location>
</feature>
<feature type="strand" evidence="11">
    <location>
        <begin position="242"/>
        <end position="247"/>
    </location>
</feature>
<accession>B5LYJ9</accession>
<organism>
    <name type="scientific">Remusatia vivipara</name>
    <name type="common">Hitchhiker elephant ear</name>
    <name type="synonym">Arum viviparum</name>
    <dbReference type="NCBI Taxonomy" id="189456"/>
    <lineage>
        <taxon>Eukaryota</taxon>
        <taxon>Viridiplantae</taxon>
        <taxon>Streptophyta</taxon>
        <taxon>Embryophyta</taxon>
        <taxon>Tracheophyta</taxon>
        <taxon>Spermatophyta</taxon>
        <taxon>Magnoliopsida</taxon>
        <taxon>Liliopsida</taxon>
        <taxon>Araceae</taxon>
        <taxon>Aroideae</taxon>
        <taxon>Colocasieae</taxon>
        <taxon>Remusatia</taxon>
    </lineage>
</organism>
<protein>
    <recommendedName>
        <fullName evidence="8">Mannose-specific lectin 1</fullName>
    </recommendedName>
    <alternativeName>
        <fullName evidence="8">Agglutinin</fullName>
    </alternativeName>
    <component>
        <recommendedName>
            <fullName evidence="8">Mannose-specific lectin 1 chain 1</fullName>
        </recommendedName>
    </component>
    <component>
        <recommendedName>
            <fullName evidence="8">Mannose-specific lectin 1 chain 2</fullName>
        </recommendedName>
    </component>
</protein>
<proteinExistence type="evidence at protein level"/>
<evidence type="ECO:0000250" key="1">
    <source>
        <dbReference type="UniProtKB" id="A5HMM7"/>
    </source>
</evidence>
<evidence type="ECO:0000250" key="2">
    <source>
        <dbReference type="UniProtKB" id="Q39487"/>
    </source>
</evidence>
<evidence type="ECO:0000250" key="3">
    <source>
        <dbReference type="UniProtKB" id="R9RL27"/>
    </source>
</evidence>
<evidence type="ECO:0000255" key="4">
    <source>
        <dbReference type="PROSITE-ProRule" id="PRU00038"/>
    </source>
</evidence>
<evidence type="ECO:0000269" key="5">
    <source>
    </source>
</evidence>
<evidence type="ECO:0000303" key="6">
    <source>
    </source>
</evidence>
<evidence type="ECO:0000303" key="7">
    <source ref="1"/>
</evidence>
<evidence type="ECO:0000305" key="8"/>
<evidence type="ECO:0000305" key="9">
    <source>
    </source>
</evidence>
<evidence type="ECO:0007744" key="10">
    <source>
        <dbReference type="PDB" id="3R0E"/>
    </source>
</evidence>
<evidence type="ECO:0007829" key="11">
    <source>
        <dbReference type="PDB" id="3R0E"/>
    </source>
</evidence>
<name>LEC1_REMVI</name>
<dbReference type="EMBL" id="EU924066">
    <property type="protein sequence ID" value="ACH41914.1"/>
    <property type="molecule type" value="Genomic_DNA"/>
</dbReference>
<dbReference type="PDB" id="3R0E">
    <property type="method" value="X-ray"/>
    <property type="resolution" value="2.40 A"/>
    <property type="chains" value="A/C=24-132, B/D=140-249"/>
</dbReference>
<dbReference type="PDBsum" id="3R0E"/>
<dbReference type="SMR" id="B5LYJ9"/>
<dbReference type="UniLectin" id="B5LYJ9"/>
<dbReference type="EvolutionaryTrace" id="B5LYJ9"/>
<dbReference type="GO" id="GO:0005576">
    <property type="term" value="C:extracellular region"/>
    <property type="evidence" value="ECO:0007669"/>
    <property type="project" value="UniProtKB-SubCell"/>
</dbReference>
<dbReference type="GO" id="GO:0005537">
    <property type="term" value="F:D-mannose binding"/>
    <property type="evidence" value="ECO:0007669"/>
    <property type="project" value="UniProtKB-KW"/>
</dbReference>
<dbReference type="GO" id="GO:0051707">
    <property type="term" value="P:response to other organism"/>
    <property type="evidence" value="ECO:0007669"/>
    <property type="project" value="UniProtKB-ARBA"/>
</dbReference>
<dbReference type="CDD" id="cd00028">
    <property type="entry name" value="B_lectin"/>
    <property type="match status" value="2"/>
</dbReference>
<dbReference type="Gene3D" id="2.90.10.10">
    <property type="entry name" value="Bulb-type lectin domain"/>
    <property type="match status" value="2"/>
</dbReference>
<dbReference type="InterPro" id="IPR001480">
    <property type="entry name" value="Bulb-type_lectin_dom"/>
</dbReference>
<dbReference type="InterPro" id="IPR036426">
    <property type="entry name" value="Bulb-type_lectin_dom_sf"/>
</dbReference>
<dbReference type="SMART" id="SM00108">
    <property type="entry name" value="B_lectin"/>
    <property type="match status" value="2"/>
</dbReference>
<dbReference type="SUPFAM" id="SSF51110">
    <property type="entry name" value="alpha-D-mannose-specific plant lectins"/>
    <property type="match status" value="2"/>
</dbReference>
<dbReference type="PROSITE" id="PS50927">
    <property type="entry name" value="BULB_LECTIN"/>
    <property type="match status" value="2"/>
</dbReference>
<gene>
    <name evidence="7" type="primary">L1</name>
    <name evidence="6" type="synonym">RVL</name>
</gene>
<sequence>MAKLLLFLLPAILGLLVPRSAVALGTNYLLSGQTLDTEGHLKNGDFDLVMQDDCNLVLYNGNWQSNTANNGRDCKLTLTDYGELVIKNGDGSTVWKSGAQSVKGNYAAVVHPDGRLVVLGPSVFKIDPWVRGLNSLRFRNIPFTNNLLFSGQVLYGDGRLTAKNHQLVMQGDCNLVLYGGKYGWQSNTHGNGEHCFLRLNHKGELIIKDDDFKTIWSSRSSSKQGEYVLILQDDGFGVIYGPAIFETSSKRSIAAS</sequence>